<comment type="function">
    <text evidence="1 2">Specifically hydrolyzes the second messenger cGMP, which is a key regulator of many important physiological processes. Highly specific: compared to other members of the cyclic nucleotide phosphodiesterase family, has the highest affinity and selectivity for cGMP. Specifically regulates natriuretic-peptide-dependent cGMP signaling in heart, acting as a regulator of cardiac hypertrophy in myocytes and muscle. Does not regulate nitric oxide-dependent cGMP in heart. Additional experiments are required to confirm whether its ability to hydrolyze natriuretic-peptide-dependent cGMP is specific to heart or is a general feature of the protein. In brain, involved in cognitive function, such as learning and long-term memory.</text>
</comment>
<comment type="catalytic activity">
    <reaction evidence="1">
        <text>3',5'-cyclic GMP + H2O = GMP + H(+)</text>
        <dbReference type="Rhea" id="RHEA:16957"/>
        <dbReference type="ChEBI" id="CHEBI:15377"/>
        <dbReference type="ChEBI" id="CHEBI:15378"/>
        <dbReference type="ChEBI" id="CHEBI:57746"/>
        <dbReference type="ChEBI" id="CHEBI:58115"/>
        <dbReference type="EC" id="3.1.4.35"/>
    </reaction>
</comment>
<comment type="cofactor">
    <cofactor evidence="1">
        <name>Zn(2+)</name>
        <dbReference type="ChEBI" id="CHEBI:29105"/>
    </cofactor>
    <text evidence="1">Binds 1 Zn(2+) ion per subunit. Binds 2 divalent metal cations per subunit: site 1 preferentially binds zinc, while site 2 has a preference for magnesium. Tightly binds zinc.</text>
</comment>
<comment type="cofactor">
    <cofactor evidence="1">
        <name>Mg(2+)</name>
        <dbReference type="ChEBI" id="CHEBI:18420"/>
    </cofactor>
    <text evidence="1">Binds 1 Mg(2+) ions per subunit. Binds 2 divalent metal cations per subunit: site 1 preferentially binds zinc, while site 2 has a preference for magnesium. Binds magnesium less tightly than zinc.</text>
</comment>
<comment type="activity regulation">
    <text evidence="5">Specifically inhibited by a compound named 3r ((R)-2-((1-cyclopentyl-4-hydroxy-1H-pyrazolo[3,4-d]pyrimidin-6- yl)amino)-N-(4-methoxyphenyl)propanamide); the inhibitor forms a hydrogen bond with Tyr-484, Ala-512 and Gln-513.</text>
</comment>
<comment type="pathway">
    <text>Purine metabolism; 3',5'-cyclic GMP degradation; GMP from 3',5'-cyclic GMP: step 1/1.</text>
</comment>
<comment type="subunit">
    <text evidence="1">Homodimer.</text>
</comment>
<comment type="subcellular location">
    <subcellularLocation>
        <location evidence="1">Cell projection</location>
        <location evidence="1">Ruffle membrane</location>
    </subcellularLocation>
    <subcellularLocation>
        <location evidence="1">Cytoplasm</location>
        <location evidence="1">Perinuclear region</location>
    </subcellularLocation>
    <subcellularLocation>
        <location evidence="1">Golgi apparatus</location>
    </subcellularLocation>
    <subcellularLocation>
        <location evidence="1">Endoplasmic reticulum</location>
    </subcellularLocation>
    <subcellularLocation>
        <location evidence="1">Cell membrane</location>
        <location evidence="1">Sarcolemma</location>
    </subcellularLocation>
</comment>
<comment type="alternative products">
    <event type="alternative splicing"/>
    <isoform>
        <id>H2QL32-1</id>
        <name>1</name>
        <sequence type="displayed"/>
    </isoform>
    <isoform>
        <id>H2QL32-2</id>
        <name>2</name>
        <sequence type="described" ref="VSP_057676"/>
    </isoform>
</comment>
<comment type="similarity">
    <text evidence="6">Belongs to the cyclic nucleotide phosphodiesterase family. PDE9 subfamily.</text>
</comment>
<accession>H2QL32</accession>
<accession>K7AGW3</accession>
<organism>
    <name type="scientific">Pan troglodytes</name>
    <name type="common">Chimpanzee</name>
    <dbReference type="NCBI Taxonomy" id="9598"/>
    <lineage>
        <taxon>Eukaryota</taxon>
        <taxon>Metazoa</taxon>
        <taxon>Chordata</taxon>
        <taxon>Craniata</taxon>
        <taxon>Vertebrata</taxon>
        <taxon>Euteleostomi</taxon>
        <taxon>Mammalia</taxon>
        <taxon>Eutheria</taxon>
        <taxon>Euarchontoglires</taxon>
        <taxon>Primates</taxon>
        <taxon>Haplorrhini</taxon>
        <taxon>Catarrhini</taxon>
        <taxon>Hominidae</taxon>
        <taxon>Pan</taxon>
    </lineage>
</organism>
<reference key="1">
    <citation type="journal article" date="2005" name="Nature">
        <title>Initial sequence of the chimpanzee genome and comparison with the human genome.</title>
        <authorList>
            <consortium name="Chimpanzee sequencing and analysis consortium"/>
        </authorList>
    </citation>
    <scope>NUCLEOTIDE SEQUENCE [LARGE SCALE GENOMIC DNA]</scope>
</reference>
<reference key="2">
    <citation type="submission" date="2012-10" db="EMBL/GenBank/DDBJ databases">
        <title>De novo assembly of the reference chimpanzee transcriptome from NextGen mRNA sequences.</title>
        <authorList>
            <person name="Maudhoo M.D."/>
            <person name="Meehan D.T."/>
            <person name="Norgren R.B. Jr."/>
        </authorList>
    </citation>
    <scope>NUCLEOTIDE SEQUENCE [LARGE SCALE MRNA] (ISOFORM 2)</scope>
</reference>
<reference evidence="7" key="3">
    <citation type="journal article" date="2014" name="J. Med. Chem.">
        <title>Discovery of a phosphodiesterase 9A inhibitor as a potential hypoglycemic agent.</title>
        <authorList>
            <person name="Shao Y.X."/>
            <person name="Huang M."/>
            <person name="Cui W."/>
            <person name="Feng L.J."/>
            <person name="Wu Y."/>
            <person name="Cai Y."/>
            <person name="Li Z."/>
            <person name="Zhu X."/>
            <person name="Liu P."/>
            <person name="Wan Y."/>
            <person name="Ke H."/>
            <person name="Luo H.B."/>
        </authorList>
    </citation>
    <scope>X-RAY CRYSTALLOGRAPHY (2.00 ANGSTROMS) IN COMPLEX WITH ZINC; MAGNESIUM AND INHIBITOR 3R</scope>
    <scope>ACTIVITY REGULATION</scope>
</reference>
<feature type="chain" id="PRO_0000433156" description="High affinity cGMP-specific 3',5'-cyclic phosphodiesterase 9A">
    <location>
        <begin position="1"/>
        <end position="593"/>
    </location>
</feature>
<feature type="domain" description="PDEase" evidence="3">
    <location>
        <begin position="236"/>
        <end position="557"/>
    </location>
</feature>
<feature type="region of interest" description="Disordered" evidence="4">
    <location>
        <begin position="87"/>
        <end position="142"/>
    </location>
</feature>
<feature type="region of interest" description="Disordered" evidence="4">
    <location>
        <begin position="564"/>
        <end position="593"/>
    </location>
</feature>
<feature type="compositionally biased region" description="Basic and acidic residues" evidence="4">
    <location>
        <begin position="104"/>
        <end position="122"/>
    </location>
</feature>
<feature type="compositionally biased region" description="Basic and acidic residues" evidence="4">
    <location>
        <begin position="576"/>
        <end position="593"/>
    </location>
</feature>
<feature type="active site" description="Proton donor" evidence="1">
    <location>
        <position position="312"/>
    </location>
</feature>
<feature type="binding site" evidence="1">
    <location>
        <begin position="312"/>
        <end position="316"/>
    </location>
    <ligand>
        <name>3',5'-cyclic GMP</name>
        <dbReference type="ChEBI" id="CHEBI:57746"/>
    </ligand>
</feature>
<feature type="binding site" evidence="5 7">
    <location>
        <position position="316"/>
    </location>
    <ligand>
        <name>Zn(2+)</name>
        <dbReference type="ChEBI" id="CHEBI:29105"/>
    </ligand>
</feature>
<feature type="binding site" evidence="5 7">
    <location>
        <position position="352"/>
    </location>
    <ligand>
        <name>Zn(2+)</name>
        <dbReference type="ChEBI" id="CHEBI:29105"/>
    </ligand>
</feature>
<feature type="binding site" evidence="1">
    <location>
        <position position="353"/>
    </location>
    <ligand>
        <name>3',5'-cyclic GMP</name>
        <dbReference type="ChEBI" id="CHEBI:57746"/>
    </ligand>
</feature>
<feature type="binding site" evidence="5 7">
    <location>
        <position position="353"/>
    </location>
    <ligand>
        <name>Mg(2+)</name>
        <dbReference type="ChEBI" id="CHEBI:18420"/>
    </ligand>
</feature>
<feature type="binding site" evidence="5 7">
    <location>
        <position position="353"/>
    </location>
    <ligand>
        <name>Zn(2+)</name>
        <dbReference type="ChEBI" id="CHEBI:29105"/>
    </ligand>
</feature>
<feature type="binding site" evidence="1">
    <location>
        <position position="462"/>
    </location>
    <ligand>
        <name>3',5'-cyclic GMP</name>
        <dbReference type="ChEBI" id="CHEBI:57746"/>
    </ligand>
</feature>
<feature type="binding site" evidence="5 7">
    <location>
        <position position="462"/>
    </location>
    <ligand>
        <name>Zn(2+)</name>
        <dbReference type="ChEBI" id="CHEBI:29105"/>
    </ligand>
</feature>
<feature type="binding site" evidence="1">
    <location>
        <position position="484"/>
    </location>
    <ligand>
        <name>3',5'-cyclic GMP</name>
        <dbReference type="ChEBI" id="CHEBI:57746"/>
    </ligand>
</feature>
<feature type="binding site" evidence="1">
    <location>
        <begin position="512"/>
        <end position="513"/>
    </location>
    <ligand>
        <name>3',5'-cyclic GMP</name>
        <dbReference type="ChEBI" id="CHEBI:57746"/>
    </ligand>
</feature>
<feature type="modified residue" description="Phosphoserine" evidence="2">
    <location>
        <position position="379"/>
    </location>
</feature>
<feature type="splice variant" id="VSP_057676" description="In isoform 2.">
    <location>
        <begin position="88"/>
        <end position="147"/>
    </location>
</feature>
<feature type="helix" evidence="8">
    <location>
        <begin position="250"/>
        <end position="255"/>
    </location>
</feature>
<feature type="helix" evidence="8">
    <location>
        <begin position="263"/>
        <end position="265"/>
    </location>
</feature>
<feature type="helix" evidence="8">
    <location>
        <begin position="268"/>
        <end position="281"/>
    </location>
</feature>
<feature type="helix" evidence="8">
    <location>
        <begin position="284"/>
        <end position="287"/>
    </location>
</feature>
<feature type="helix" evidence="8">
    <location>
        <begin position="292"/>
        <end position="304"/>
    </location>
</feature>
<feature type="strand" evidence="8">
    <location>
        <begin position="310"/>
        <end position="313"/>
    </location>
</feature>
<feature type="helix" evidence="8">
    <location>
        <begin position="314"/>
        <end position="330"/>
    </location>
</feature>
<feature type="helix" evidence="8">
    <location>
        <begin position="333"/>
        <end position="335"/>
    </location>
</feature>
<feature type="helix" evidence="8">
    <location>
        <begin position="339"/>
        <end position="351"/>
    </location>
</feature>
<feature type="turn" evidence="8">
    <location>
        <begin position="352"/>
        <end position="355"/>
    </location>
</feature>
<feature type="helix" evidence="8">
    <location>
        <begin position="361"/>
        <end position="366"/>
    </location>
</feature>
<feature type="helix" evidence="8">
    <location>
        <begin position="370"/>
        <end position="374"/>
    </location>
</feature>
<feature type="turn" evidence="8">
    <location>
        <begin position="375"/>
        <end position="377"/>
    </location>
</feature>
<feature type="helix" evidence="8">
    <location>
        <begin position="380"/>
        <end position="394"/>
    </location>
</feature>
<feature type="helix" evidence="8">
    <location>
        <begin position="396"/>
        <end position="398"/>
    </location>
</feature>
<feature type="turn" evidence="8">
    <location>
        <begin position="400"/>
        <end position="403"/>
    </location>
</feature>
<feature type="helix" evidence="8">
    <location>
        <begin position="406"/>
        <end position="421"/>
    </location>
</feature>
<feature type="helix" evidence="8">
    <location>
        <begin position="425"/>
        <end position="427"/>
    </location>
</feature>
<feature type="helix" evidence="8">
    <location>
        <begin position="428"/>
        <end position="438"/>
    </location>
</feature>
<feature type="helix" evidence="8">
    <location>
        <begin position="439"/>
        <end position="441"/>
    </location>
</feature>
<feature type="helix" evidence="8">
    <location>
        <begin position="447"/>
        <end position="462"/>
    </location>
</feature>
<feature type="helix" evidence="8">
    <location>
        <begin position="465"/>
        <end position="467"/>
    </location>
</feature>
<feature type="helix" evidence="8">
    <location>
        <begin position="470"/>
        <end position="492"/>
    </location>
</feature>
<feature type="turn" evidence="8">
    <location>
        <begin position="493"/>
        <end position="495"/>
    </location>
</feature>
<feature type="helix" evidence="8">
    <location>
        <begin position="500"/>
        <end position="502"/>
    </location>
</feature>
<feature type="turn" evidence="8">
    <location>
        <begin position="504"/>
        <end position="506"/>
    </location>
</feature>
<feature type="helix" evidence="8">
    <location>
        <begin position="509"/>
        <end position="519"/>
    </location>
</feature>
<feature type="helix" evidence="8">
    <location>
        <begin position="521"/>
        <end position="531"/>
    </location>
</feature>
<feature type="helix" evidence="8">
    <location>
        <begin position="534"/>
        <end position="538"/>
    </location>
</feature>
<feature type="helix" evidence="8">
    <location>
        <begin position="540"/>
        <end position="562"/>
    </location>
</feature>
<dbReference type="EC" id="3.1.4.35" evidence="1"/>
<dbReference type="EMBL" id="BS000229">
    <property type="status" value="NOT_ANNOTATED_CDS"/>
    <property type="molecule type" value="Genomic_DNA"/>
</dbReference>
<dbReference type="EMBL" id="BS000230">
    <property type="status" value="NOT_ANNOTATED_CDS"/>
    <property type="molecule type" value="Genomic_DNA"/>
</dbReference>
<dbReference type="EMBL" id="GABC01010554">
    <property type="protein sequence ID" value="JAA00784.1"/>
    <property type="molecule type" value="mRNA"/>
</dbReference>
<dbReference type="RefSeq" id="XP_001140087.3">
    <molecule id="H2QL32-2"/>
    <property type="nucleotide sequence ID" value="XM_001140087.8"/>
</dbReference>
<dbReference type="RefSeq" id="XP_001140174.3">
    <molecule id="H2QL32-1"/>
    <property type="nucleotide sequence ID" value="XM_001140174.8"/>
</dbReference>
<dbReference type="PDB" id="4QGE">
    <property type="method" value="X-ray"/>
    <property type="resolution" value="2.00 A"/>
    <property type="chains" value="A/B=1-593"/>
</dbReference>
<dbReference type="PDBsum" id="4QGE"/>
<dbReference type="SMR" id="H2QL32"/>
<dbReference type="FunCoup" id="H2QL32">
    <property type="interactions" value="436"/>
</dbReference>
<dbReference type="STRING" id="9598.ENSPTRP00000024002"/>
<dbReference type="PaxDb" id="9598-ENSPTRP00000024002"/>
<dbReference type="GeneID" id="474020"/>
<dbReference type="eggNOG" id="KOG3689">
    <property type="taxonomic scope" value="Eukaryota"/>
</dbReference>
<dbReference type="HOGENOM" id="CLU_032104_1_0_1"/>
<dbReference type="InParanoid" id="H2QL32"/>
<dbReference type="TreeFam" id="TF314638"/>
<dbReference type="UniPathway" id="UPA00763">
    <property type="reaction ID" value="UER00748"/>
</dbReference>
<dbReference type="EvolutionaryTrace" id="H2QL32"/>
<dbReference type="Proteomes" id="UP000002277">
    <property type="component" value="Unplaced"/>
</dbReference>
<dbReference type="GO" id="GO:0005783">
    <property type="term" value="C:endoplasmic reticulum"/>
    <property type="evidence" value="ECO:0007669"/>
    <property type="project" value="UniProtKB-SubCell"/>
</dbReference>
<dbReference type="GO" id="GO:0005794">
    <property type="term" value="C:Golgi apparatus"/>
    <property type="evidence" value="ECO:0007669"/>
    <property type="project" value="UniProtKB-SubCell"/>
</dbReference>
<dbReference type="GO" id="GO:0048471">
    <property type="term" value="C:perinuclear region of cytoplasm"/>
    <property type="evidence" value="ECO:0007669"/>
    <property type="project" value="UniProtKB-SubCell"/>
</dbReference>
<dbReference type="GO" id="GO:0032587">
    <property type="term" value="C:ruffle membrane"/>
    <property type="evidence" value="ECO:0007669"/>
    <property type="project" value="UniProtKB-SubCell"/>
</dbReference>
<dbReference type="GO" id="GO:0042383">
    <property type="term" value="C:sarcolemma"/>
    <property type="evidence" value="ECO:0000250"/>
    <property type="project" value="UniProtKB"/>
</dbReference>
<dbReference type="GO" id="GO:0004115">
    <property type="term" value="F:3',5'-cyclic-AMP phosphodiesterase activity"/>
    <property type="evidence" value="ECO:0000318"/>
    <property type="project" value="GO_Central"/>
</dbReference>
<dbReference type="GO" id="GO:0047555">
    <property type="term" value="F:3',5'-cyclic-GMP phosphodiesterase activity"/>
    <property type="evidence" value="ECO:0000250"/>
    <property type="project" value="UniProtKB"/>
</dbReference>
<dbReference type="GO" id="GO:0046872">
    <property type="term" value="F:metal ion binding"/>
    <property type="evidence" value="ECO:0007669"/>
    <property type="project" value="UniProtKB-KW"/>
</dbReference>
<dbReference type="GO" id="GO:0019933">
    <property type="term" value="P:cAMP-mediated signaling"/>
    <property type="evidence" value="ECO:0000318"/>
    <property type="project" value="GO_Central"/>
</dbReference>
<dbReference type="GO" id="GO:0046069">
    <property type="term" value="P:cGMP catabolic process"/>
    <property type="evidence" value="ECO:0000250"/>
    <property type="project" value="UniProtKB"/>
</dbReference>
<dbReference type="GO" id="GO:0046068">
    <property type="term" value="P:cGMP metabolic process"/>
    <property type="evidence" value="ECO:0000250"/>
    <property type="project" value="UniProtKB"/>
</dbReference>
<dbReference type="GO" id="GO:0010613">
    <property type="term" value="P:positive regulation of cardiac muscle hypertrophy"/>
    <property type="evidence" value="ECO:0000250"/>
    <property type="project" value="UniProtKB"/>
</dbReference>
<dbReference type="CDD" id="cd00077">
    <property type="entry name" value="HDc"/>
    <property type="match status" value="1"/>
</dbReference>
<dbReference type="FunFam" id="1.10.1300.10:FF:000006">
    <property type="entry name" value="Phosphodiesterase 9A"/>
    <property type="match status" value="1"/>
</dbReference>
<dbReference type="Gene3D" id="1.10.1300.10">
    <property type="entry name" value="3'5'-cyclic nucleotide phosphodiesterase, catalytic domain"/>
    <property type="match status" value="1"/>
</dbReference>
<dbReference type="InterPro" id="IPR003607">
    <property type="entry name" value="HD/PDEase_dom"/>
</dbReference>
<dbReference type="InterPro" id="IPR023088">
    <property type="entry name" value="PDEase"/>
</dbReference>
<dbReference type="InterPro" id="IPR002073">
    <property type="entry name" value="PDEase_catalytic_dom"/>
</dbReference>
<dbReference type="InterPro" id="IPR036971">
    <property type="entry name" value="PDEase_catalytic_dom_sf"/>
</dbReference>
<dbReference type="InterPro" id="IPR023174">
    <property type="entry name" value="PDEase_CS"/>
</dbReference>
<dbReference type="PANTHER" id="PTHR11347">
    <property type="entry name" value="CYCLIC NUCLEOTIDE PHOSPHODIESTERASE"/>
    <property type="match status" value="1"/>
</dbReference>
<dbReference type="Pfam" id="PF00233">
    <property type="entry name" value="PDEase_I"/>
    <property type="match status" value="1"/>
</dbReference>
<dbReference type="PRINTS" id="PR00387">
    <property type="entry name" value="PDIESTERASE1"/>
</dbReference>
<dbReference type="SMART" id="SM00471">
    <property type="entry name" value="HDc"/>
    <property type="match status" value="1"/>
</dbReference>
<dbReference type="SUPFAM" id="SSF109604">
    <property type="entry name" value="HD-domain/PDEase-like"/>
    <property type="match status" value="1"/>
</dbReference>
<dbReference type="PROSITE" id="PS00126">
    <property type="entry name" value="PDEASE_I_1"/>
    <property type="match status" value="1"/>
</dbReference>
<dbReference type="PROSITE" id="PS51845">
    <property type="entry name" value="PDEASE_I_2"/>
    <property type="match status" value="1"/>
</dbReference>
<proteinExistence type="evidence at protein level"/>
<evidence type="ECO:0000250" key="1">
    <source>
        <dbReference type="UniProtKB" id="O76083"/>
    </source>
</evidence>
<evidence type="ECO:0000250" key="2">
    <source>
        <dbReference type="UniProtKB" id="Q8QZV1"/>
    </source>
</evidence>
<evidence type="ECO:0000255" key="3">
    <source>
        <dbReference type="PROSITE-ProRule" id="PRU01192"/>
    </source>
</evidence>
<evidence type="ECO:0000256" key="4">
    <source>
        <dbReference type="SAM" id="MobiDB-lite"/>
    </source>
</evidence>
<evidence type="ECO:0000269" key="5">
    <source>
    </source>
</evidence>
<evidence type="ECO:0000305" key="6"/>
<evidence type="ECO:0007744" key="7">
    <source>
        <dbReference type="PDB" id="4QGE"/>
    </source>
</evidence>
<evidence type="ECO:0007829" key="8">
    <source>
        <dbReference type="PDB" id="4QGE"/>
    </source>
</evidence>
<protein>
    <recommendedName>
        <fullName evidence="6">High affinity cGMP-specific 3',5'-cyclic phosphodiesterase 9A</fullName>
        <ecNumber evidence="1">3.1.4.35</ecNumber>
    </recommendedName>
</protein>
<name>PDE9A_PANTR</name>
<keyword id="KW-0002">3D-structure</keyword>
<keyword id="KW-0025">Alternative splicing</keyword>
<keyword id="KW-1003">Cell membrane</keyword>
<keyword id="KW-0966">Cell projection</keyword>
<keyword id="KW-0140">cGMP</keyword>
<keyword id="KW-0963">Cytoplasm</keyword>
<keyword id="KW-0256">Endoplasmic reticulum</keyword>
<keyword id="KW-0333">Golgi apparatus</keyword>
<keyword id="KW-0378">Hydrolase</keyword>
<keyword id="KW-0460">Magnesium</keyword>
<keyword id="KW-0472">Membrane</keyword>
<keyword id="KW-0479">Metal-binding</keyword>
<keyword id="KW-0597">Phosphoprotein</keyword>
<keyword id="KW-1185">Reference proteome</keyword>
<keyword id="KW-0862">Zinc</keyword>
<gene>
    <name type="primary">PDE9A</name>
</gene>
<sequence>MGSGSSSYRPKAIYLDIDGRIQKVIFSKYCNSSDIMDLFCIATGLPRNTTISLLTTDDAMVSIDPTMPANSERTPYKVRPVAIKQLSAGVEDKRTTSRGQSAERPLRDRRVVGLEQPRREGAFESGQVEPRPREPQGCCQEGQRIPPEREELIQSVLAQVAEQFSRAFKINELKAEVANHLAVLEKRVELEGLKVVEIEKCKSDIKKMREELAARSSRTNCPCKYSFLDNHKKLTPRRDVPTYPKYLLSPETIEALRKPTFDVWLWEPNEMLSCLEHMYHDLGLVRDFSINPVTLRRWLFCVHDNYRNNPFHNFRHCFCVAQMMYSMVWLCSLQENFSQMDILILMTAAICHDLDHPGYNNTYQINARTELAVRYNDISPLENHHCAVAFQILAEPECNIFSNIPPDGFKQIRQGMITLILATDMARHAEIMDSFKEKMENFDYSNEEHMTLLKMILIKCCDISNEVRPMEVAEPWVDCLLEEYFMQSDREKSEGLPVAPFMDRDKVTKATAQIGFIKFVLIPMFETVTKLFPMVEEIMLQPLWESRDRYEELKRIDDAMKELQKKTDSLTSGATEKSRERSRDVKNSEGDCA</sequence>